<keyword id="KW-1185">Reference proteome</keyword>
<keyword id="KW-0687">Ribonucleoprotein</keyword>
<keyword id="KW-0689">Ribosomal protein</keyword>
<protein>
    <recommendedName>
        <fullName evidence="1">Large ribosomal subunit protein uL13</fullName>
    </recommendedName>
    <alternativeName>
        <fullName evidence="2">50S ribosomal protein L13</fullName>
    </alternativeName>
</protein>
<comment type="function">
    <text evidence="1">This protein is one of the early assembly proteins of the 50S ribosomal subunit, although it is not seen to bind rRNA by itself. It is important during the early stages of 50S assembly.</text>
</comment>
<comment type="subunit">
    <text evidence="1">Part of the 50S ribosomal subunit.</text>
</comment>
<comment type="similarity">
    <text evidence="1">Belongs to the universal ribosomal protein uL13 family.</text>
</comment>
<gene>
    <name evidence="1" type="primary">rplM</name>
    <name type="ordered locus">RC1_1314</name>
</gene>
<proteinExistence type="inferred from homology"/>
<evidence type="ECO:0000255" key="1">
    <source>
        <dbReference type="HAMAP-Rule" id="MF_01366"/>
    </source>
</evidence>
<evidence type="ECO:0000305" key="2"/>
<organism>
    <name type="scientific">Rhodospirillum centenum (strain ATCC 51521 / SW)</name>
    <dbReference type="NCBI Taxonomy" id="414684"/>
    <lineage>
        <taxon>Bacteria</taxon>
        <taxon>Pseudomonadati</taxon>
        <taxon>Pseudomonadota</taxon>
        <taxon>Alphaproteobacteria</taxon>
        <taxon>Rhodospirillales</taxon>
        <taxon>Rhodospirillaceae</taxon>
        <taxon>Rhodospirillum</taxon>
    </lineage>
</organism>
<name>RL13_RHOCS</name>
<dbReference type="EMBL" id="CP000613">
    <property type="protein sequence ID" value="ACI98719.1"/>
    <property type="molecule type" value="Genomic_DNA"/>
</dbReference>
<dbReference type="RefSeq" id="WP_012566506.1">
    <property type="nucleotide sequence ID" value="NC_011420.2"/>
</dbReference>
<dbReference type="SMR" id="B6IMQ3"/>
<dbReference type="STRING" id="414684.RC1_1314"/>
<dbReference type="KEGG" id="rce:RC1_1314"/>
<dbReference type="eggNOG" id="COG0102">
    <property type="taxonomic scope" value="Bacteria"/>
</dbReference>
<dbReference type="HOGENOM" id="CLU_082184_2_0_5"/>
<dbReference type="OrthoDB" id="9801330at2"/>
<dbReference type="Proteomes" id="UP000001591">
    <property type="component" value="Chromosome"/>
</dbReference>
<dbReference type="GO" id="GO:0022625">
    <property type="term" value="C:cytosolic large ribosomal subunit"/>
    <property type="evidence" value="ECO:0007669"/>
    <property type="project" value="TreeGrafter"/>
</dbReference>
<dbReference type="GO" id="GO:0003729">
    <property type="term" value="F:mRNA binding"/>
    <property type="evidence" value="ECO:0007669"/>
    <property type="project" value="TreeGrafter"/>
</dbReference>
<dbReference type="GO" id="GO:0003735">
    <property type="term" value="F:structural constituent of ribosome"/>
    <property type="evidence" value="ECO:0007669"/>
    <property type="project" value="InterPro"/>
</dbReference>
<dbReference type="GO" id="GO:0017148">
    <property type="term" value="P:negative regulation of translation"/>
    <property type="evidence" value="ECO:0007669"/>
    <property type="project" value="TreeGrafter"/>
</dbReference>
<dbReference type="GO" id="GO:0006412">
    <property type="term" value="P:translation"/>
    <property type="evidence" value="ECO:0007669"/>
    <property type="project" value="UniProtKB-UniRule"/>
</dbReference>
<dbReference type="CDD" id="cd00392">
    <property type="entry name" value="Ribosomal_L13"/>
    <property type="match status" value="1"/>
</dbReference>
<dbReference type="FunFam" id="3.90.1180.10:FF:000001">
    <property type="entry name" value="50S ribosomal protein L13"/>
    <property type="match status" value="1"/>
</dbReference>
<dbReference type="Gene3D" id="3.90.1180.10">
    <property type="entry name" value="Ribosomal protein L13"/>
    <property type="match status" value="1"/>
</dbReference>
<dbReference type="HAMAP" id="MF_01366">
    <property type="entry name" value="Ribosomal_uL13"/>
    <property type="match status" value="1"/>
</dbReference>
<dbReference type="InterPro" id="IPR005822">
    <property type="entry name" value="Ribosomal_uL13"/>
</dbReference>
<dbReference type="InterPro" id="IPR005823">
    <property type="entry name" value="Ribosomal_uL13_bac-type"/>
</dbReference>
<dbReference type="InterPro" id="IPR036899">
    <property type="entry name" value="Ribosomal_uL13_sf"/>
</dbReference>
<dbReference type="NCBIfam" id="TIGR01066">
    <property type="entry name" value="rplM_bact"/>
    <property type="match status" value="1"/>
</dbReference>
<dbReference type="PANTHER" id="PTHR11545:SF2">
    <property type="entry name" value="LARGE RIBOSOMAL SUBUNIT PROTEIN UL13M"/>
    <property type="match status" value="1"/>
</dbReference>
<dbReference type="PANTHER" id="PTHR11545">
    <property type="entry name" value="RIBOSOMAL PROTEIN L13"/>
    <property type="match status" value="1"/>
</dbReference>
<dbReference type="Pfam" id="PF00572">
    <property type="entry name" value="Ribosomal_L13"/>
    <property type="match status" value="1"/>
</dbReference>
<dbReference type="PIRSF" id="PIRSF002181">
    <property type="entry name" value="Ribosomal_L13"/>
    <property type="match status" value="1"/>
</dbReference>
<dbReference type="SUPFAM" id="SSF52161">
    <property type="entry name" value="Ribosomal protein L13"/>
    <property type="match status" value="1"/>
</dbReference>
<reference key="1">
    <citation type="submission" date="2007-03" db="EMBL/GenBank/DDBJ databases">
        <title>Genome sequence of Rhodospirillum centenum.</title>
        <authorList>
            <person name="Touchman J.W."/>
            <person name="Bauer C."/>
            <person name="Blankenship R.E."/>
        </authorList>
    </citation>
    <scope>NUCLEOTIDE SEQUENCE [LARGE SCALE GENOMIC DNA]</scope>
    <source>
        <strain>ATCC 51521 / SW</strain>
    </source>
</reference>
<sequence>MKTLSLKPSEIEKKWILIDADGLVLGRLASQIAMRLRGKHKPTYTPHMDCGDNVIVINAEKVKLTGNKRQDDIFYWHTGYPGGIKGRSKGQILDGRFPERVIIKAVERMVPRGPLGRRQMGNLRVYAGTAHPHEAQQPEVLDVAAMNPKNKRSA</sequence>
<feature type="chain" id="PRO_1000144171" description="Large ribosomal subunit protein uL13">
    <location>
        <begin position="1"/>
        <end position="154"/>
    </location>
</feature>
<accession>B6IMQ3</accession>